<feature type="chain" id="PRO_0000293282" description="Small ribosomal subunit protein uS4">
    <location>
        <begin position="1"/>
        <end position="206"/>
    </location>
</feature>
<feature type="domain" description="S4 RNA-binding" evidence="1">
    <location>
        <begin position="96"/>
        <end position="158"/>
    </location>
</feature>
<keyword id="KW-0687">Ribonucleoprotein</keyword>
<keyword id="KW-0689">Ribosomal protein</keyword>
<keyword id="KW-0694">RNA-binding</keyword>
<keyword id="KW-0699">rRNA-binding</keyword>
<sequence length="206" mass="23237">MARYLGPKCKLSRREGTDLFLKSGVKANDEKCKMNTAPGQHGARRARLSDYGLQLREKQKVRRMYGILEGQFKKYYVEASRRKGNTGATLLELLESRLDNVVYRMGFAATRAEARQLVVHKGIMVNGHTCNVPSAQVKAGDVVAVREKAKKQLRIQNAVELAKHRKELSWIDVNTDSLEGTMKSSPDRSELSADINEQLIIELYSK</sequence>
<proteinExistence type="inferred from homology"/>
<dbReference type="EMBL" id="CP000439">
    <property type="protein sequence ID" value="ABK89172.1"/>
    <property type="molecule type" value="Genomic_DNA"/>
</dbReference>
<dbReference type="RefSeq" id="WP_003014378.1">
    <property type="nucleotide sequence ID" value="NZ_CP009633.1"/>
</dbReference>
<dbReference type="SMR" id="A0Q4K7"/>
<dbReference type="GeneID" id="75264237"/>
<dbReference type="KEGG" id="ftn:FTN_0263"/>
<dbReference type="KEGG" id="ftx:AW25_1779"/>
<dbReference type="BioCyc" id="FTUL401614:G1G75-274-MONOMER"/>
<dbReference type="Proteomes" id="UP000000762">
    <property type="component" value="Chromosome"/>
</dbReference>
<dbReference type="GO" id="GO:0015935">
    <property type="term" value="C:small ribosomal subunit"/>
    <property type="evidence" value="ECO:0007669"/>
    <property type="project" value="InterPro"/>
</dbReference>
<dbReference type="GO" id="GO:0019843">
    <property type="term" value="F:rRNA binding"/>
    <property type="evidence" value="ECO:0007669"/>
    <property type="project" value="UniProtKB-UniRule"/>
</dbReference>
<dbReference type="GO" id="GO:0003735">
    <property type="term" value="F:structural constituent of ribosome"/>
    <property type="evidence" value="ECO:0007669"/>
    <property type="project" value="InterPro"/>
</dbReference>
<dbReference type="GO" id="GO:0042274">
    <property type="term" value="P:ribosomal small subunit biogenesis"/>
    <property type="evidence" value="ECO:0007669"/>
    <property type="project" value="TreeGrafter"/>
</dbReference>
<dbReference type="GO" id="GO:0006412">
    <property type="term" value="P:translation"/>
    <property type="evidence" value="ECO:0007669"/>
    <property type="project" value="UniProtKB-UniRule"/>
</dbReference>
<dbReference type="CDD" id="cd00165">
    <property type="entry name" value="S4"/>
    <property type="match status" value="1"/>
</dbReference>
<dbReference type="FunFam" id="1.10.1050.10:FF:000001">
    <property type="entry name" value="30S ribosomal protein S4"/>
    <property type="match status" value="1"/>
</dbReference>
<dbReference type="FunFam" id="3.10.290.10:FF:000001">
    <property type="entry name" value="30S ribosomal protein S4"/>
    <property type="match status" value="1"/>
</dbReference>
<dbReference type="Gene3D" id="1.10.1050.10">
    <property type="entry name" value="Ribosomal Protein S4 Delta 41, Chain A, domain 1"/>
    <property type="match status" value="1"/>
</dbReference>
<dbReference type="Gene3D" id="3.10.290.10">
    <property type="entry name" value="RNA-binding S4 domain"/>
    <property type="match status" value="1"/>
</dbReference>
<dbReference type="HAMAP" id="MF_01306_B">
    <property type="entry name" value="Ribosomal_uS4_B"/>
    <property type="match status" value="1"/>
</dbReference>
<dbReference type="InterPro" id="IPR022801">
    <property type="entry name" value="Ribosomal_uS4"/>
</dbReference>
<dbReference type="InterPro" id="IPR005709">
    <property type="entry name" value="Ribosomal_uS4_bac-type"/>
</dbReference>
<dbReference type="InterPro" id="IPR018079">
    <property type="entry name" value="Ribosomal_uS4_CS"/>
</dbReference>
<dbReference type="InterPro" id="IPR001912">
    <property type="entry name" value="Ribosomal_uS4_N"/>
</dbReference>
<dbReference type="InterPro" id="IPR002942">
    <property type="entry name" value="S4_RNA-bd"/>
</dbReference>
<dbReference type="InterPro" id="IPR036986">
    <property type="entry name" value="S4_RNA-bd_sf"/>
</dbReference>
<dbReference type="NCBIfam" id="NF003717">
    <property type="entry name" value="PRK05327.1"/>
    <property type="match status" value="1"/>
</dbReference>
<dbReference type="NCBIfam" id="TIGR01017">
    <property type="entry name" value="rpsD_bact"/>
    <property type="match status" value="1"/>
</dbReference>
<dbReference type="PANTHER" id="PTHR11831">
    <property type="entry name" value="30S 40S RIBOSOMAL PROTEIN"/>
    <property type="match status" value="1"/>
</dbReference>
<dbReference type="PANTHER" id="PTHR11831:SF4">
    <property type="entry name" value="SMALL RIBOSOMAL SUBUNIT PROTEIN US4M"/>
    <property type="match status" value="1"/>
</dbReference>
<dbReference type="Pfam" id="PF00163">
    <property type="entry name" value="Ribosomal_S4"/>
    <property type="match status" value="1"/>
</dbReference>
<dbReference type="Pfam" id="PF01479">
    <property type="entry name" value="S4"/>
    <property type="match status" value="1"/>
</dbReference>
<dbReference type="SMART" id="SM01390">
    <property type="entry name" value="Ribosomal_S4"/>
    <property type="match status" value="1"/>
</dbReference>
<dbReference type="SMART" id="SM00363">
    <property type="entry name" value="S4"/>
    <property type="match status" value="1"/>
</dbReference>
<dbReference type="SUPFAM" id="SSF55174">
    <property type="entry name" value="Alpha-L RNA-binding motif"/>
    <property type="match status" value="1"/>
</dbReference>
<dbReference type="PROSITE" id="PS00632">
    <property type="entry name" value="RIBOSOMAL_S4"/>
    <property type="match status" value="1"/>
</dbReference>
<dbReference type="PROSITE" id="PS50889">
    <property type="entry name" value="S4"/>
    <property type="match status" value="1"/>
</dbReference>
<evidence type="ECO:0000255" key="1">
    <source>
        <dbReference type="HAMAP-Rule" id="MF_01306"/>
    </source>
</evidence>
<evidence type="ECO:0000305" key="2"/>
<accession>A0Q4K7</accession>
<name>RS4_FRATN</name>
<reference key="1">
    <citation type="journal article" date="2007" name="Genome Biol.">
        <title>Comparison of Francisella tularensis genomes reveals evolutionary events associated with the emergence of human pathogenic strains.</title>
        <authorList>
            <person name="Rohmer L."/>
            <person name="Fong C."/>
            <person name="Abmayr S."/>
            <person name="Wasnick M."/>
            <person name="Larson Freeman T.J."/>
            <person name="Radey M."/>
            <person name="Guina T."/>
            <person name="Svensson K."/>
            <person name="Hayden H.S."/>
            <person name="Jacobs M."/>
            <person name="Gallagher L.A."/>
            <person name="Manoil C."/>
            <person name="Ernst R.K."/>
            <person name="Drees B."/>
            <person name="Buckley D."/>
            <person name="Haugen E."/>
            <person name="Bovee D."/>
            <person name="Zhou Y."/>
            <person name="Chang J."/>
            <person name="Levy R."/>
            <person name="Lim R."/>
            <person name="Gillett W."/>
            <person name="Guenthener D."/>
            <person name="Kang A."/>
            <person name="Shaffer S.A."/>
            <person name="Taylor G."/>
            <person name="Chen J."/>
            <person name="Gallis B."/>
            <person name="D'Argenio D.A."/>
            <person name="Forsman M."/>
            <person name="Olson M.V."/>
            <person name="Goodlett D.R."/>
            <person name="Kaul R."/>
            <person name="Miller S.I."/>
            <person name="Brittnacher M.J."/>
        </authorList>
    </citation>
    <scope>NUCLEOTIDE SEQUENCE [LARGE SCALE GENOMIC DNA]</scope>
    <source>
        <strain>U112</strain>
    </source>
</reference>
<protein>
    <recommendedName>
        <fullName evidence="1">Small ribosomal subunit protein uS4</fullName>
    </recommendedName>
    <alternativeName>
        <fullName evidence="2">30S ribosomal protein S4</fullName>
    </alternativeName>
</protein>
<gene>
    <name evidence="1" type="primary">rpsD</name>
    <name type="ordered locus">FTN_0263</name>
</gene>
<organism>
    <name type="scientific">Francisella tularensis subsp. novicida (strain U112)</name>
    <dbReference type="NCBI Taxonomy" id="401614"/>
    <lineage>
        <taxon>Bacteria</taxon>
        <taxon>Pseudomonadati</taxon>
        <taxon>Pseudomonadota</taxon>
        <taxon>Gammaproteobacteria</taxon>
        <taxon>Thiotrichales</taxon>
        <taxon>Francisellaceae</taxon>
        <taxon>Francisella</taxon>
    </lineage>
</organism>
<comment type="function">
    <text evidence="1">One of the primary rRNA binding proteins, it binds directly to 16S rRNA where it nucleates assembly of the body of the 30S subunit.</text>
</comment>
<comment type="function">
    <text evidence="1">With S5 and S12 plays an important role in translational accuracy.</text>
</comment>
<comment type="subunit">
    <text evidence="1">Part of the 30S ribosomal subunit. Contacts protein S5. The interaction surface between S4 and S5 is involved in control of translational fidelity.</text>
</comment>
<comment type="similarity">
    <text evidence="1">Belongs to the universal ribosomal protein uS4 family.</text>
</comment>